<evidence type="ECO:0000305" key="1"/>
<accession>O29891</accession>
<feature type="chain" id="PRO_0000080151" description="Uncharacterized sugar kinase AF_0356">
    <location>
        <begin position="1"/>
        <end position="250"/>
    </location>
</feature>
<name>Y356_ARCFU</name>
<sequence length="250" mass="27536">MGLSRLGIETAYIGKVGSDEEGRILLADFEREGVSTDFVIRAEGRSGTAMIFVDEKGNRAILVDPGVNDTIAYDEIDVDSARKYDLIHLTSFICKNGLDSLNSQKRIVEEFDSVSFDPGMPYAERGLGDMEKILKNTTIFLPNRQEIEMLFSEDYRTAAERCIEMGIEIVAVKLGSEGCWIKKGDREVTVKPVSTKVVDTTGAGDAFNAGFLYGYLKGKDIEECGRLGNFVAAKCIEKYGAREGLPRSVD</sequence>
<protein>
    <recommendedName>
        <fullName>Uncharacterized sugar kinase AF_0356</fullName>
        <ecNumber>2.7.1.-</ecNumber>
    </recommendedName>
</protein>
<organism>
    <name type="scientific">Archaeoglobus fulgidus (strain ATCC 49558 / DSM 4304 / JCM 9628 / NBRC 100126 / VC-16)</name>
    <dbReference type="NCBI Taxonomy" id="224325"/>
    <lineage>
        <taxon>Archaea</taxon>
        <taxon>Methanobacteriati</taxon>
        <taxon>Methanobacteriota</taxon>
        <taxon>Archaeoglobi</taxon>
        <taxon>Archaeoglobales</taxon>
        <taxon>Archaeoglobaceae</taxon>
        <taxon>Archaeoglobus</taxon>
    </lineage>
</organism>
<reference key="1">
    <citation type="journal article" date="1997" name="Nature">
        <title>The complete genome sequence of the hyperthermophilic, sulphate-reducing archaeon Archaeoglobus fulgidus.</title>
        <authorList>
            <person name="Klenk H.-P."/>
            <person name="Clayton R.A."/>
            <person name="Tomb J.-F."/>
            <person name="White O."/>
            <person name="Nelson K.E."/>
            <person name="Ketchum K.A."/>
            <person name="Dodson R.J."/>
            <person name="Gwinn M.L."/>
            <person name="Hickey E.K."/>
            <person name="Peterson J.D."/>
            <person name="Richardson D.L."/>
            <person name="Kerlavage A.R."/>
            <person name="Graham D.E."/>
            <person name="Kyrpides N.C."/>
            <person name="Fleischmann R.D."/>
            <person name="Quackenbush J."/>
            <person name="Lee N.H."/>
            <person name="Sutton G.G."/>
            <person name="Gill S.R."/>
            <person name="Kirkness E.F."/>
            <person name="Dougherty B.A."/>
            <person name="McKenney K."/>
            <person name="Adams M.D."/>
            <person name="Loftus B.J."/>
            <person name="Peterson S.N."/>
            <person name="Reich C.I."/>
            <person name="McNeil L.K."/>
            <person name="Badger J.H."/>
            <person name="Glodek A."/>
            <person name="Zhou L."/>
            <person name="Overbeek R."/>
            <person name="Gocayne J.D."/>
            <person name="Weidman J.F."/>
            <person name="McDonald L.A."/>
            <person name="Utterback T.R."/>
            <person name="Cotton M.D."/>
            <person name="Spriggs T."/>
            <person name="Artiach P."/>
            <person name="Kaine B.P."/>
            <person name="Sykes S.M."/>
            <person name="Sadow P.W."/>
            <person name="D'Andrea K.P."/>
            <person name="Bowman C."/>
            <person name="Fujii C."/>
            <person name="Garland S.A."/>
            <person name="Mason T.M."/>
            <person name="Olsen G.J."/>
            <person name="Fraser C.M."/>
            <person name="Smith H.O."/>
            <person name="Woese C.R."/>
            <person name="Venter J.C."/>
        </authorList>
    </citation>
    <scope>NUCLEOTIDE SEQUENCE [LARGE SCALE GENOMIC DNA]</scope>
    <source>
        <strain>ATCC 49558 / DSM 4304 / JCM 9628 / NBRC 100126 / VC-16</strain>
    </source>
</reference>
<comment type="similarity">
    <text evidence="1">Belongs to the carbohydrate kinase PfkB family.</text>
</comment>
<keyword id="KW-0418">Kinase</keyword>
<keyword id="KW-1185">Reference proteome</keyword>
<keyword id="KW-0808">Transferase</keyword>
<dbReference type="EC" id="2.7.1.-"/>
<dbReference type="EMBL" id="AE000782">
    <property type="protein sequence ID" value="AAB90880.1"/>
    <property type="molecule type" value="Genomic_DNA"/>
</dbReference>
<dbReference type="PIR" id="D69294">
    <property type="entry name" value="D69294"/>
</dbReference>
<dbReference type="SMR" id="O29891"/>
<dbReference type="STRING" id="224325.AF_0356"/>
<dbReference type="PaxDb" id="224325-AF_0356"/>
<dbReference type="EnsemblBacteria" id="AAB90880">
    <property type="protein sequence ID" value="AAB90880"/>
    <property type="gene ID" value="AF_0356"/>
</dbReference>
<dbReference type="KEGG" id="afu:AF_0356"/>
<dbReference type="eggNOG" id="arCOG00014">
    <property type="taxonomic scope" value="Archaea"/>
</dbReference>
<dbReference type="HOGENOM" id="CLU_027634_13_0_2"/>
<dbReference type="PhylomeDB" id="O29891"/>
<dbReference type="Proteomes" id="UP000002199">
    <property type="component" value="Chromosome"/>
</dbReference>
<dbReference type="GO" id="GO:0016301">
    <property type="term" value="F:kinase activity"/>
    <property type="evidence" value="ECO:0007669"/>
    <property type="project" value="UniProtKB-KW"/>
</dbReference>
<dbReference type="Gene3D" id="3.40.1190.20">
    <property type="match status" value="1"/>
</dbReference>
<dbReference type="InterPro" id="IPR002173">
    <property type="entry name" value="Carboh/pur_kinase_PfkB_CS"/>
</dbReference>
<dbReference type="InterPro" id="IPR011611">
    <property type="entry name" value="PfkB_dom"/>
</dbReference>
<dbReference type="InterPro" id="IPR029056">
    <property type="entry name" value="Ribokinase-like"/>
</dbReference>
<dbReference type="PANTHER" id="PTHR10584:SF166">
    <property type="entry name" value="RIBOKINASE"/>
    <property type="match status" value="1"/>
</dbReference>
<dbReference type="PANTHER" id="PTHR10584">
    <property type="entry name" value="SUGAR KINASE"/>
    <property type="match status" value="1"/>
</dbReference>
<dbReference type="Pfam" id="PF00294">
    <property type="entry name" value="PfkB"/>
    <property type="match status" value="1"/>
</dbReference>
<dbReference type="SUPFAM" id="SSF53613">
    <property type="entry name" value="Ribokinase-like"/>
    <property type="match status" value="1"/>
</dbReference>
<dbReference type="PROSITE" id="PS00584">
    <property type="entry name" value="PFKB_KINASES_2"/>
    <property type="match status" value="1"/>
</dbReference>
<gene>
    <name type="ordered locus">AF_0356</name>
</gene>
<proteinExistence type="inferred from homology"/>